<evidence type="ECO:0000255" key="1">
    <source>
        <dbReference type="HAMAP-Rule" id="MF_01307"/>
    </source>
</evidence>
<evidence type="ECO:0000305" key="2"/>
<protein>
    <recommendedName>
        <fullName evidence="1">Small ribosomal subunit protein uS5</fullName>
    </recommendedName>
    <alternativeName>
        <fullName evidence="2">30S ribosomal protein S5</fullName>
    </alternativeName>
</protein>
<accession>C4L7U7</accession>
<feature type="chain" id="PRO_1000214327" description="Small ribosomal subunit protein uS5">
    <location>
        <begin position="1"/>
        <end position="166"/>
    </location>
</feature>
<feature type="domain" description="S5 DRBM" evidence="1">
    <location>
        <begin position="11"/>
        <end position="74"/>
    </location>
</feature>
<sequence>MSKIESQAGELQEKLVAVNRVSKVVKGGRIFSFTALTVVGDGSGRVGFGYGKAREVPAAIQKAMEQARRNMVKVELIEGTLHHHVKGTHAGSTVFMQPASQGTGIIAGGAMRAVLEVAGVHNVLAKTYGSTNPMNVVRATIEALADIKSPEQVAAKRGLRVEEILG</sequence>
<comment type="function">
    <text evidence="1">With S4 and S12 plays an important role in translational accuracy.</text>
</comment>
<comment type="function">
    <text evidence="1">Located at the back of the 30S subunit body where it stabilizes the conformation of the head with respect to the body.</text>
</comment>
<comment type="subunit">
    <text evidence="1">Part of the 30S ribosomal subunit. Contacts proteins S4 and S8.</text>
</comment>
<comment type="domain">
    <text>The N-terminal domain interacts with the head of the 30S subunit; the C-terminal domain interacts with the body and contacts protein S4. The interaction surface between S4 and S5 is involved in control of translational fidelity.</text>
</comment>
<comment type="similarity">
    <text evidence="1">Belongs to the universal ribosomal protein uS5 family.</text>
</comment>
<dbReference type="EMBL" id="CP001616">
    <property type="protein sequence ID" value="ACQ91746.1"/>
    <property type="molecule type" value="Genomic_DNA"/>
</dbReference>
<dbReference type="RefSeq" id="WP_012728345.1">
    <property type="nucleotide sequence ID" value="NC_012691.1"/>
</dbReference>
<dbReference type="SMR" id="C4L7U7"/>
<dbReference type="STRING" id="595494.Tola_0116"/>
<dbReference type="KEGG" id="tau:Tola_0116"/>
<dbReference type="eggNOG" id="COG0098">
    <property type="taxonomic scope" value="Bacteria"/>
</dbReference>
<dbReference type="HOGENOM" id="CLU_065898_2_2_6"/>
<dbReference type="OrthoDB" id="9809045at2"/>
<dbReference type="Proteomes" id="UP000009073">
    <property type="component" value="Chromosome"/>
</dbReference>
<dbReference type="GO" id="GO:0015935">
    <property type="term" value="C:small ribosomal subunit"/>
    <property type="evidence" value="ECO:0007669"/>
    <property type="project" value="InterPro"/>
</dbReference>
<dbReference type="GO" id="GO:0019843">
    <property type="term" value="F:rRNA binding"/>
    <property type="evidence" value="ECO:0007669"/>
    <property type="project" value="UniProtKB-UniRule"/>
</dbReference>
<dbReference type="GO" id="GO:0003735">
    <property type="term" value="F:structural constituent of ribosome"/>
    <property type="evidence" value="ECO:0007669"/>
    <property type="project" value="InterPro"/>
</dbReference>
<dbReference type="GO" id="GO:0006412">
    <property type="term" value="P:translation"/>
    <property type="evidence" value="ECO:0007669"/>
    <property type="project" value="UniProtKB-UniRule"/>
</dbReference>
<dbReference type="FunFam" id="3.30.160.20:FF:000001">
    <property type="entry name" value="30S ribosomal protein S5"/>
    <property type="match status" value="1"/>
</dbReference>
<dbReference type="FunFam" id="3.30.230.10:FF:000002">
    <property type="entry name" value="30S ribosomal protein S5"/>
    <property type="match status" value="1"/>
</dbReference>
<dbReference type="Gene3D" id="3.30.160.20">
    <property type="match status" value="1"/>
</dbReference>
<dbReference type="Gene3D" id="3.30.230.10">
    <property type="match status" value="1"/>
</dbReference>
<dbReference type="HAMAP" id="MF_01307_B">
    <property type="entry name" value="Ribosomal_uS5_B"/>
    <property type="match status" value="1"/>
</dbReference>
<dbReference type="InterPro" id="IPR020568">
    <property type="entry name" value="Ribosomal_Su5_D2-typ_SF"/>
</dbReference>
<dbReference type="InterPro" id="IPR000851">
    <property type="entry name" value="Ribosomal_uS5"/>
</dbReference>
<dbReference type="InterPro" id="IPR005712">
    <property type="entry name" value="Ribosomal_uS5_bac-type"/>
</dbReference>
<dbReference type="InterPro" id="IPR005324">
    <property type="entry name" value="Ribosomal_uS5_C"/>
</dbReference>
<dbReference type="InterPro" id="IPR013810">
    <property type="entry name" value="Ribosomal_uS5_N"/>
</dbReference>
<dbReference type="InterPro" id="IPR018192">
    <property type="entry name" value="Ribosomal_uS5_N_CS"/>
</dbReference>
<dbReference type="InterPro" id="IPR014721">
    <property type="entry name" value="Ribsml_uS5_D2-typ_fold_subgr"/>
</dbReference>
<dbReference type="NCBIfam" id="TIGR01021">
    <property type="entry name" value="rpsE_bact"/>
    <property type="match status" value="1"/>
</dbReference>
<dbReference type="PANTHER" id="PTHR48277">
    <property type="entry name" value="MITOCHONDRIAL RIBOSOMAL PROTEIN S5"/>
    <property type="match status" value="1"/>
</dbReference>
<dbReference type="PANTHER" id="PTHR48277:SF1">
    <property type="entry name" value="MITOCHONDRIAL RIBOSOMAL PROTEIN S5"/>
    <property type="match status" value="1"/>
</dbReference>
<dbReference type="Pfam" id="PF00333">
    <property type="entry name" value="Ribosomal_S5"/>
    <property type="match status" value="1"/>
</dbReference>
<dbReference type="Pfam" id="PF03719">
    <property type="entry name" value="Ribosomal_S5_C"/>
    <property type="match status" value="1"/>
</dbReference>
<dbReference type="SUPFAM" id="SSF54768">
    <property type="entry name" value="dsRNA-binding domain-like"/>
    <property type="match status" value="1"/>
</dbReference>
<dbReference type="SUPFAM" id="SSF54211">
    <property type="entry name" value="Ribosomal protein S5 domain 2-like"/>
    <property type="match status" value="1"/>
</dbReference>
<dbReference type="PROSITE" id="PS00585">
    <property type="entry name" value="RIBOSOMAL_S5"/>
    <property type="match status" value="1"/>
</dbReference>
<dbReference type="PROSITE" id="PS50881">
    <property type="entry name" value="S5_DSRBD"/>
    <property type="match status" value="1"/>
</dbReference>
<gene>
    <name evidence="1" type="primary">rpsE</name>
    <name type="ordered locus">Tola_0116</name>
</gene>
<keyword id="KW-1185">Reference proteome</keyword>
<keyword id="KW-0687">Ribonucleoprotein</keyword>
<keyword id="KW-0689">Ribosomal protein</keyword>
<keyword id="KW-0694">RNA-binding</keyword>
<keyword id="KW-0699">rRNA-binding</keyword>
<name>RS5_TOLAT</name>
<proteinExistence type="inferred from homology"/>
<reference key="1">
    <citation type="submission" date="2009-05" db="EMBL/GenBank/DDBJ databases">
        <title>Complete sequence of Tolumonas auensis DSM 9187.</title>
        <authorList>
            <consortium name="US DOE Joint Genome Institute"/>
            <person name="Lucas S."/>
            <person name="Copeland A."/>
            <person name="Lapidus A."/>
            <person name="Glavina del Rio T."/>
            <person name="Tice H."/>
            <person name="Bruce D."/>
            <person name="Goodwin L."/>
            <person name="Pitluck S."/>
            <person name="Chertkov O."/>
            <person name="Brettin T."/>
            <person name="Detter J.C."/>
            <person name="Han C."/>
            <person name="Larimer F."/>
            <person name="Land M."/>
            <person name="Hauser L."/>
            <person name="Kyrpides N."/>
            <person name="Mikhailova N."/>
            <person name="Spring S."/>
            <person name="Beller H."/>
        </authorList>
    </citation>
    <scope>NUCLEOTIDE SEQUENCE [LARGE SCALE GENOMIC DNA]</scope>
    <source>
        <strain>DSM 9187 / NBRC 110442 / TA 4</strain>
    </source>
</reference>
<organism>
    <name type="scientific">Tolumonas auensis (strain DSM 9187 / NBRC 110442 / TA 4)</name>
    <dbReference type="NCBI Taxonomy" id="595494"/>
    <lineage>
        <taxon>Bacteria</taxon>
        <taxon>Pseudomonadati</taxon>
        <taxon>Pseudomonadota</taxon>
        <taxon>Gammaproteobacteria</taxon>
        <taxon>Aeromonadales</taxon>
        <taxon>Aeromonadaceae</taxon>
        <taxon>Tolumonas</taxon>
    </lineage>
</organism>